<reference key="1">
    <citation type="journal article" date="2008" name="BMC Genomics">
        <title>The missing link: Bordetella petrii is endowed with both the metabolic versatility of environmental bacteria and virulence traits of pathogenic Bordetellae.</title>
        <authorList>
            <person name="Gross R."/>
            <person name="Guzman C.A."/>
            <person name="Sebaihia M."/>
            <person name="Martin dos Santos V.A.P."/>
            <person name="Pieper D.H."/>
            <person name="Koebnik R."/>
            <person name="Lechner M."/>
            <person name="Bartels D."/>
            <person name="Buhrmester J."/>
            <person name="Choudhuri J.V."/>
            <person name="Ebensen T."/>
            <person name="Gaigalat L."/>
            <person name="Herrmann S."/>
            <person name="Khachane A.N."/>
            <person name="Larisch C."/>
            <person name="Link S."/>
            <person name="Linke B."/>
            <person name="Meyer F."/>
            <person name="Mormann S."/>
            <person name="Nakunst D."/>
            <person name="Rueckert C."/>
            <person name="Schneiker-Bekel S."/>
            <person name="Schulze K."/>
            <person name="Voerholter F.-J."/>
            <person name="Yevsa T."/>
            <person name="Engle J.T."/>
            <person name="Goldman W.E."/>
            <person name="Puehler A."/>
            <person name="Goebel U.B."/>
            <person name="Goesmann A."/>
            <person name="Bloecker H."/>
            <person name="Kaiser O."/>
            <person name="Martinez-Arias R."/>
        </authorList>
    </citation>
    <scope>NUCLEOTIDE SEQUENCE [LARGE SCALE GENOMIC DNA]</scope>
    <source>
        <strain>ATCC BAA-461 / DSM 12804 / CCUG 43448</strain>
    </source>
</reference>
<name>TRUA_BORPD</name>
<sequence length="268" mass="29959">MPRMALGLAYDGSSWQGWQTQPHRQTVQDTLEAALARFAGIDGSLPTVCAGRTDTGVHAAMQVVHLDTRLERRAESWVRGVNAFLPPSIAVQWAQPVPDDFHARFSARSRTYLYLLWRGRVRPPLWAGRAGWCFQPLDVQAMRQAASALLGEHDFSSFRSSQCQARHPVRTLHRLDIDERGPFLVFTLRANAFLHHMVRNLMGALLQIGQGRQPVAWMPAVLAARDRRLAAPTFAADGLYLSAIEYPPEYKLNDTDGSGQLLSPFTFA</sequence>
<proteinExistence type="inferred from homology"/>
<protein>
    <recommendedName>
        <fullName evidence="1">tRNA pseudouridine synthase A</fullName>
        <ecNumber evidence="1">5.4.99.12</ecNumber>
    </recommendedName>
    <alternativeName>
        <fullName evidence="1">tRNA pseudouridine(38-40) synthase</fullName>
    </alternativeName>
    <alternativeName>
        <fullName evidence="1">tRNA pseudouridylate synthase I</fullName>
    </alternativeName>
    <alternativeName>
        <fullName evidence="1">tRNA-uridine isomerase I</fullName>
    </alternativeName>
</protein>
<gene>
    <name evidence="1" type="primary">truA</name>
    <name type="ordered locus">Bpet2846</name>
</gene>
<comment type="function">
    <text evidence="1">Formation of pseudouridine at positions 38, 39 and 40 in the anticodon stem and loop of transfer RNAs.</text>
</comment>
<comment type="catalytic activity">
    <reaction evidence="1">
        <text>uridine(38/39/40) in tRNA = pseudouridine(38/39/40) in tRNA</text>
        <dbReference type="Rhea" id="RHEA:22376"/>
        <dbReference type="Rhea" id="RHEA-COMP:10085"/>
        <dbReference type="Rhea" id="RHEA-COMP:10087"/>
        <dbReference type="ChEBI" id="CHEBI:65314"/>
        <dbReference type="ChEBI" id="CHEBI:65315"/>
        <dbReference type="EC" id="5.4.99.12"/>
    </reaction>
</comment>
<comment type="subunit">
    <text evidence="1">Homodimer.</text>
</comment>
<comment type="similarity">
    <text evidence="1">Belongs to the tRNA pseudouridine synthase TruA family.</text>
</comment>
<organism>
    <name type="scientific">Bordetella petrii (strain ATCC BAA-461 / DSM 12804 / CCUG 43448)</name>
    <dbReference type="NCBI Taxonomy" id="340100"/>
    <lineage>
        <taxon>Bacteria</taxon>
        <taxon>Pseudomonadati</taxon>
        <taxon>Pseudomonadota</taxon>
        <taxon>Betaproteobacteria</taxon>
        <taxon>Burkholderiales</taxon>
        <taxon>Alcaligenaceae</taxon>
        <taxon>Bordetella</taxon>
    </lineage>
</organism>
<keyword id="KW-0413">Isomerase</keyword>
<keyword id="KW-0819">tRNA processing</keyword>
<feature type="chain" id="PRO_1000097722" description="tRNA pseudouridine synthase A">
    <location>
        <begin position="1"/>
        <end position="268"/>
    </location>
</feature>
<feature type="active site" description="Nucleophile" evidence="1">
    <location>
        <position position="54"/>
    </location>
</feature>
<feature type="binding site" evidence="1">
    <location>
        <position position="112"/>
    </location>
    <ligand>
        <name>substrate</name>
    </ligand>
</feature>
<evidence type="ECO:0000255" key="1">
    <source>
        <dbReference type="HAMAP-Rule" id="MF_00171"/>
    </source>
</evidence>
<dbReference type="EC" id="5.4.99.12" evidence="1"/>
<dbReference type="EMBL" id="AM902716">
    <property type="protein sequence ID" value="CAP43188.1"/>
    <property type="molecule type" value="Genomic_DNA"/>
</dbReference>
<dbReference type="SMR" id="A9IRL0"/>
<dbReference type="STRING" id="94624.Bpet2846"/>
<dbReference type="KEGG" id="bpt:Bpet2846"/>
<dbReference type="eggNOG" id="COG0101">
    <property type="taxonomic scope" value="Bacteria"/>
</dbReference>
<dbReference type="Proteomes" id="UP000001225">
    <property type="component" value="Chromosome"/>
</dbReference>
<dbReference type="GO" id="GO:0003723">
    <property type="term" value="F:RNA binding"/>
    <property type="evidence" value="ECO:0007669"/>
    <property type="project" value="InterPro"/>
</dbReference>
<dbReference type="GO" id="GO:0160147">
    <property type="term" value="F:tRNA pseudouridine(38-40) synthase activity"/>
    <property type="evidence" value="ECO:0007669"/>
    <property type="project" value="UniProtKB-EC"/>
</dbReference>
<dbReference type="GO" id="GO:0031119">
    <property type="term" value="P:tRNA pseudouridine synthesis"/>
    <property type="evidence" value="ECO:0007669"/>
    <property type="project" value="UniProtKB-UniRule"/>
</dbReference>
<dbReference type="CDD" id="cd02570">
    <property type="entry name" value="PseudoU_synth_EcTruA"/>
    <property type="match status" value="1"/>
</dbReference>
<dbReference type="FunFam" id="3.30.70.580:FF:000001">
    <property type="entry name" value="tRNA pseudouridine synthase A"/>
    <property type="match status" value="1"/>
</dbReference>
<dbReference type="Gene3D" id="3.30.70.660">
    <property type="entry name" value="Pseudouridine synthase I, catalytic domain, C-terminal subdomain"/>
    <property type="match status" value="1"/>
</dbReference>
<dbReference type="Gene3D" id="3.30.70.580">
    <property type="entry name" value="Pseudouridine synthase I, catalytic domain, N-terminal subdomain"/>
    <property type="match status" value="1"/>
</dbReference>
<dbReference type="HAMAP" id="MF_00171">
    <property type="entry name" value="TruA"/>
    <property type="match status" value="1"/>
</dbReference>
<dbReference type="InterPro" id="IPR020103">
    <property type="entry name" value="PsdUridine_synth_cat_dom_sf"/>
</dbReference>
<dbReference type="InterPro" id="IPR001406">
    <property type="entry name" value="PsdUridine_synth_TruA"/>
</dbReference>
<dbReference type="InterPro" id="IPR020097">
    <property type="entry name" value="PsdUridine_synth_TruA_a/b_dom"/>
</dbReference>
<dbReference type="InterPro" id="IPR020095">
    <property type="entry name" value="PsdUridine_synth_TruA_C"/>
</dbReference>
<dbReference type="InterPro" id="IPR020094">
    <property type="entry name" value="TruA/RsuA/RluB/E/F_N"/>
</dbReference>
<dbReference type="NCBIfam" id="TIGR00071">
    <property type="entry name" value="hisT_truA"/>
    <property type="match status" value="1"/>
</dbReference>
<dbReference type="PANTHER" id="PTHR11142">
    <property type="entry name" value="PSEUDOURIDYLATE SYNTHASE"/>
    <property type="match status" value="1"/>
</dbReference>
<dbReference type="PANTHER" id="PTHR11142:SF0">
    <property type="entry name" value="TRNA PSEUDOURIDINE SYNTHASE-LIKE 1"/>
    <property type="match status" value="1"/>
</dbReference>
<dbReference type="Pfam" id="PF01416">
    <property type="entry name" value="PseudoU_synth_1"/>
    <property type="match status" value="2"/>
</dbReference>
<dbReference type="PIRSF" id="PIRSF001430">
    <property type="entry name" value="tRNA_psdUrid_synth"/>
    <property type="match status" value="1"/>
</dbReference>
<dbReference type="SUPFAM" id="SSF55120">
    <property type="entry name" value="Pseudouridine synthase"/>
    <property type="match status" value="1"/>
</dbReference>
<accession>A9IRL0</accession>